<keyword id="KW-0004">4Fe-4S</keyword>
<keyword id="KW-0342">GTP-binding</keyword>
<keyword id="KW-0408">Iron</keyword>
<keyword id="KW-0411">Iron-sulfur</keyword>
<keyword id="KW-0456">Lyase</keyword>
<keyword id="KW-0479">Metal-binding</keyword>
<keyword id="KW-0501">Molybdenum cofactor biosynthesis</keyword>
<keyword id="KW-0547">Nucleotide-binding</keyword>
<keyword id="KW-1185">Reference proteome</keyword>
<keyword id="KW-0949">S-adenosyl-L-methionine</keyword>
<comment type="function">
    <text evidence="1">Catalyzes the cyclization of GTP to (8S)-3',8-cyclo-7,8-dihydroguanosine 5'-triphosphate.</text>
</comment>
<comment type="catalytic activity">
    <reaction evidence="1">
        <text>GTP + AH2 + S-adenosyl-L-methionine = (8S)-3',8-cyclo-7,8-dihydroguanosine 5'-triphosphate + 5'-deoxyadenosine + L-methionine + A + H(+)</text>
        <dbReference type="Rhea" id="RHEA:49576"/>
        <dbReference type="ChEBI" id="CHEBI:13193"/>
        <dbReference type="ChEBI" id="CHEBI:15378"/>
        <dbReference type="ChEBI" id="CHEBI:17319"/>
        <dbReference type="ChEBI" id="CHEBI:17499"/>
        <dbReference type="ChEBI" id="CHEBI:37565"/>
        <dbReference type="ChEBI" id="CHEBI:57844"/>
        <dbReference type="ChEBI" id="CHEBI:59789"/>
        <dbReference type="ChEBI" id="CHEBI:131766"/>
        <dbReference type="EC" id="4.1.99.22"/>
    </reaction>
</comment>
<comment type="cofactor">
    <cofactor evidence="1">
        <name>[4Fe-4S] cluster</name>
        <dbReference type="ChEBI" id="CHEBI:49883"/>
    </cofactor>
    <text evidence="1">Binds 2 [4Fe-4S] clusters. Binds 1 [4Fe-4S] cluster coordinated with 3 cysteines and an exchangeable S-adenosyl-L-methionine and 1 [4Fe-4S] cluster coordinated with 3 cysteines and the GTP-derived substrate.</text>
</comment>
<comment type="pathway">
    <text evidence="1">Cofactor biosynthesis; molybdopterin biosynthesis.</text>
</comment>
<comment type="subunit">
    <text evidence="1">Monomer and homodimer.</text>
</comment>
<comment type="similarity">
    <text evidence="1">Belongs to the radical SAM superfamily. MoaA family.</text>
</comment>
<comment type="sequence caution" evidence="4">
    <conflict type="erroneous initiation">
        <sequence resource="EMBL-CDS" id="CAF19901"/>
    </conflict>
</comment>
<name>MOAA_CORGL</name>
<organism>
    <name type="scientific">Corynebacterium glutamicum (strain ATCC 13032 / DSM 20300 / JCM 1318 / BCRC 11384 / CCUG 27702 / LMG 3730 / NBRC 12168 / NCIMB 10025 / NRRL B-2784 / 534)</name>
    <dbReference type="NCBI Taxonomy" id="196627"/>
    <lineage>
        <taxon>Bacteria</taxon>
        <taxon>Bacillati</taxon>
        <taxon>Actinomycetota</taxon>
        <taxon>Actinomycetes</taxon>
        <taxon>Mycobacteriales</taxon>
        <taxon>Corynebacteriaceae</taxon>
        <taxon>Corynebacterium</taxon>
    </lineage>
</organism>
<accession>Q8NR60</accession>
<evidence type="ECO:0000255" key="1">
    <source>
        <dbReference type="HAMAP-Rule" id="MF_01225"/>
    </source>
</evidence>
<evidence type="ECO:0000255" key="2">
    <source>
        <dbReference type="PROSITE-ProRule" id="PRU01266"/>
    </source>
</evidence>
<evidence type="ECO:0000256" key="3">
    <source>
        <dbReference type="SAM" id="MobiDB-lite"/>
    </source>
</evidence>
<evidence type="ECO:0000305" key="4"/>
<protein>
    <recommendedName>
        <fullName evidence="1">GTP 3',8-cyclase</fullName>
        <ecNumber evidence="1">4.1.99.22</ecNumber>
    </recommendedName>
    <alternativeName>
        <fullName evidence="1">Molybdenum cofactor biosynthesis protein A</fullName>
    </alternativeName>
</protein>
<feature type="chain" id="PRO_0000152957" description="GTP 3',8-cyclase">
    <location>
        <begin position="1"/>
        <end position="377"/>
    </location>
</feature>
<feature type="domain" description="Radical SAM core" evidence="2">
    <location>
        <begin position="45"/>
        <end position="271"/>
    </location>
</feature>
<feature type="region of interest" description="Disordered" evidence="3">
    <location>
        <begin position="1"/>
        <end position="29"/>
    </location>
</feature>
<feature type="binding site" evidence="1">
    <location>
        <position position="54"/>
    </location>
    <ligand>
        <name>GTP</name>
        <dbReference type="ChEBI" id="CHEBI:37565"/>
    </ligand>
</feature>
<feature type="binding site" evidence="1">
    <location>
        <position position="61"/>
    </location>
    <ligand>
        <name>[4Fe-4S] cluster</name>
        <dbReference type="ChEBI" id="CHEBI:49883"/>
        <label>1</label>
        <note>4Fe-4S-S-AdoMet</note>
    </ligand>
</feature>
<feature type="binding site" evidence="1">
    <location>
        <position position="65"/>
    </location>
    <ligand>
        <name>[4Fe-4S] cluster</name>
        <dbReference type="ChEBI" id="CHEBI:49883"/>
        <label>1</label>
        <note>4Fe-4S-S-AdoMet</note>
    </ligand>
</feature>
<feature type="binding site" evidence="1">
    <location>
        <position position="67"/>
    </location>
    <ligand>
        <name>S-adenosyl-L-methionine</name>
        <dbReference type="ChEBI" id="CHEBI:59789"/>
    </ligand>
</feature>
<feature type="binding site" evidence="1">
    <location>
        <position position="68"/>
    </location>
    <ligand>
        <name>[4Fe-4S] cluster</name>
        <dbReference type="ChEBI" id="CHEBI:49883"/>
        <label>1</label>
        <note>4Fe-4S-S-AdoMet</note>
    </ligand>
</feature>
<feature type="binding site" evidence="1">
    <location>
        <position position="105"/>
    </location>
    <ligand>
        <name>GTP</name>
        <dbReference type="ChEBI" id="CHEBI:37565"/>
    </ligand>
</feature>
<feature type="binding site" evidence="1">
    <location>
        <position position="109"/>
    </location>
    <ligand>
        <name>S-adenosyl-L-methionine</name>
        <dbReference type="ChEBI" id="CHEBI:59789"/>
    </ligand>
</feature>
<feature type="binding site" evidence="1">
    <location>
        <position position="140"/>
    </location>
    <ligand>
        <name>GTP</name>
        <dbReference type="ChEBI" id="CHEBI:37565"/>
    </ligand>
</feature>
<feature type="binding site" evidence="1">
    <location>
        <position position="164"/>
    </location>
    <ligand>
        <name>S-adenosyl-L-methionine</name>
        <dbReference type="ChEBI" id="CHEBI:59789"/>
    </ligand>
</feature>
<feature type="binding site" evidence="1">
    <location>
        <position position="201"/>
    </location>
    <ligand>
        <name>GTP</name>
        <dbReference type="ChEBI" id="CHEBI:37565"/>
    </ligand>
</feature>
<feature type="binding site" evidence="1">
    <location>
        <position position="235"/>
    </location>
    <ligand>
        <name>S-adenosyl-L-methionine</name>
        <dbReference type="ChEBI" id="CHEBI:59789"/>
    </ligand>
</feature>
<feature type="binding site" evidence="1">
    <location>
        <position position="304"/>
    </location>
    <ligand>
        <name>[4Fe-4S] cluster</name>
        <dbReference type="ChEBI" id="CHEBI:49883"/>
        <label>2</label>
        <note>4Fe-4S-substrate</note>
    </ligand>
</feature>
<feature type="binding site" evidence="1">
    <location>
        <position position="307"/>
    </location>
    <ligand>
        <name>[4Fe-4S] cluster</name>
        <dbReference type="ChEBI" id="CHEBI:49883"/>
        <label>2</label>
        <note>4Fe-4S-substrate</note>
    </ligand>
</feature>
<feature type="binding site" evidence="1">
    <location>
        <begin position="309"/>
        <end position="311"/>
    </location>
    <ligand>
        <name>GTP</name>
        <dbReference type="ChEBI" id="CHEBI:37565"/>
    </ligand>
</feature>
<feature type="binding site" evidence="1">
    <location>
        <position position="321"/>
    </location>
    <ligand>
        <name>[4Fe-4S] cluster</name>
        <dbReference type="ChEBI" id="CHEBI:49883"/>
        <label>2</label>
        <note>4Fe-4S-substrate</note>
    </ligand>
</feature>
<reference key="1">
    <citation type="journal article" date="2003" name="Appl. Microbiol. Biotechnol.">
        <title>The Corynebacterium glutamicum genome: features and impacts on biotechnological processes.</title>
        <authorList>
            <person name="Ikeda M."/>
            <person name="Nakagawa S."/>
        </authorList>
    </citation>
    <scope>NUCLEOTIDE SEQUENCE [LARGE SCALE GENOMIC DNA]</scope>
    <source>
        <strain>ATCC 13032 / DSM 20300 / JCM 1318 / BCRC 11384 / CCUG 27702 / LMG 3730 / NBRC 12168 / NCIMB 10025 / NRRL B-2784 / 534</strain>
    </source>
</reference>
<reference key="2">
    <citation type="journal article" date="2003" name="J. Biotechnol.">
        <title>The complete Corynebacterium glutamicum ATCC 13032 genome sequence and its impact on the production of L-aspartate-derived amino acids and vitamins.</title>
        <authorList>
            <person name="Kalinowski J."/>
            <person name="Bathe B."/>
            <person name="Bartels D."/>
            <person name="Bischoff N."/>
            <person name="Bott M."/>
            <person name="Burkovski A."/>
            <person name="Dusch N."/>
            <person name="Eggeling L."/>
            <person name="Eikmanns B.J."/>
            <person name="Gaigalat L."/>
            <person name="Goesmann A."/>
            <person name="Hartmann M."/>
            <person name="Huthmacher K."/>
            <person name="Kraemer R."/>
            <person name="Linke B."/>
            <person name="McHardy A.C."/>
            <person name="Meyer F."/>
            <person name="Moeckel B."/>
            <person name="Pfefferle W."/>
            <person name="Puehler A."/>
            <person name="Rey D.A."/>
            <person name="Rueckert C."/>
            <person name="Rupp O."/>
            <person name="Sahm H."/>
            <person name="Wendisch V.F."/>
            <person name="Wiegraebe I."/>
            <person name="Tauch A."/>
        </authorList>
    </citation>
    <scope>NUCLEOTIDE SEQUENCE [LARGE SCALE GENOMIC DNA]</scope>
    <source>
        <strain>ATCC 13032 / DSM 20300 / JCM 1318 / BCRC 11384 / CCUG 27702 / LMG 3730 / NBRC 12168 / NCIMB 10025 / NRRL B-2784 / 534</strain>
    </source>
</reference>
<dbReference type="EC" id="4.1.99.22" evidence="1"/>
<dbReference type="EMBL" id="BA000036">
    <property type="protein sequence ID" value="BAB98590.1"/>
    <property type="molecule type" value="Genomic_DNA"/>
</dbReference>
<dbReference type="EMBL" id="BX927151">
    <property type="protein sequence ID" value="CAF19901.1"/>
    <property type="status" value="ALT_INIT"/>
    <property type="molecule type" value="Genomic_DNA"/>
</dbReference>
<dbReference type="RefSeq" id="NP_600423.2">
    <property type="nucleotide sequence ID" value="NC_003450.3"/>
</dbReference>
<dbReference type="RefSeq" id="WP_011014195.1">
    <property type="nucleotide sequence ID" value="NC_006958.1"/>
</dbReference>
<dbReference type="SMR" id="Q8NR60"/>
<dbReference type="STRING" id="196627.cg1352"/>
<dbReference type="GeneID" id="1019180"/>
<dbReference type="KEGG" id="cgb:cg1352"/>
<dbReference type="KEGG" id="cgl:Cgl1197"/>
<dbReference type="PATRIC" id="fig|196627.13.peg.1177"/>
<dbReference type="eggNOG" id="COG2896">
    <property type="taxonomic scope" value="Bacteria"/>
</dbReference>
<dbReference type="HOGENOM" id="CLU_009273_0_1_11"/>
<dbReference type="OrthoDB" id="9763993at2"/>
<dbReference type="BioCyc" id="CORYNE:G18NG-10770-MONOMER"/>
<dbReference type="UniPathway" id="UPA00344"/>
<dbReference type="Proteomes" id="UP000000582">
    <property type="component" value="Chromosome"/>
</dbReference>
<dbReference type="Proteomes" id="UP000001009">
    <property type="component" value="Chromosome"/>
</dbReference>
<dbReference type="GO" id="GO:0051539">
    <property type="term" value="F:4 iron, 4 sulfur cluster binding"/>
    <property type="evidence" value="ECO:0007669"/>
    <property type="project" value="UniProtKB-UniRule"/>
</dbReference>
<dbReference type="GO" id="GO:0061799">
    <property type="term" value="F:cyclic pyranopterin monophosphate synthase activity"/>
    <property type="evidence" value="ECO:0007669"/>
    <property type="project" value="TreeGrafter"/>
</dbReference>
<dbReference type="GO" id="GO:0061798">
    <property type="term" value="F:GTP 3',8'-cyclase activity"/>
    <property type="evidence" value="ECO:0007669"/>
    <property type="project" value="UniProtKB-UniRule"/>
</dbReference>
<dbReference type="GO" id="GO:0005525">
    <property type="term" value="F:GTP binding"/>
    <property type="evidence" value="ECO:0007669"/>
    <property type="project" value="UniProtKB-UniRule"/>
</dbReference>
<dbReference type="GO" id="GO:0046872">
    <property type="term" value="F:metal ion binding"/>
    <property type="evidence" value="ECO:0007669"/>
    <property type="project" value="UniProtKB-KW"/>
</dbReference>
<dbReference type="GO" id="GO:1904047">
    <property type="term" value="F:S-adenosyl-L-methionine binding"/>
    <property type="evidence" value="ECO:0007669"/>
    <property type="project" value="UniProtKB-UniRule"/>
</dbReference>
<dbReference type="GO" id="GO:0006777">
    <property type="term" value="P:Mo-molybdopterin cofactor biosynthetic process"/>
    <property type="evidence" value="ECO:0007669"/>
    <property type="project" value="UniProtKB-UniRule"/>
</dbReference>
<dbReference type="CDD" id="cd01335">
    <property type="entry name" value="Radical_SAM"/>
    <property type="match status" value="1"/>
</dbReference>
<dbReference type="CDD" id="cd21117">
    <property type="entry name" value="Twitch_MoaA"/>
    <property type="match status" value="1"/>
</dbReference>
<dbReference type="Gene3D" id="3.20.20.70">
    <property type="entry name" value="Aldolase class I"/>
    <property type="match status" value="1"/>
</dbReference>
<dbReference type="HAMAP" id="MF_01225_B">
    <property type="entry name" value="MoaA_B"/>
    <property type="match status" value="1"/>
</dbReference>
<dbReference type="InterPro" id="IPR013785">
    <property type="entry name" value="Aldolase_TIM"/>
</dbReference>
<dbReference type="InterPro" id="IPR006638">
    <property type="entry name" value="Elp3/MiaA/NifB-like_rSAM"/>
</dbReference>
<dbReference type="InterPro" id="IPR013483">
    <property type="entry name" value="MoaA"/>
</dbReference>
<dbReference type="InterPro" id="IPR000385">
    <property type="entry name" value="MoaA_NifB_PqqE_Fe-S-bd_CS"/>
</dbReference>
<dbReference type="InterPro" id="IPR010505">
    <property type="entry name" value="MoaA_twitch"/>
</dbReference>
<dbReference type="InterPro" id="IPR050105">
    <property type="entry name" value="MoCo_biosynth_MoaA/MoaC"/>
</dbReference>
<dbReference type="InterPro" id="IPR007197">
    <property type="entry name" value="rSAM"/>
</dbReference>
<dbReference type="NCBIfam" id="TIGR02666">
    <property type="entry name" value="moaA"/>
    <property type="match status" value="1"/>
</dbReference>
<dbReference type="PANTHER" id="PTHR22960:SF0">
    <property type="entry name" value="MOLYBDENUM COFACTOR BIOSYNTHESIS PROTEIN 1"/>
    <property type="match status" value="1"/>
</dbReference>
<dbReference type="PANTHER" id="PTHR22960">
    <property type="entry name" value="MOLYBDOPTERIN COFACTOR SYNTHESIS PROTEIN A"/>
    <property type="match status" value="1"/>
</dbReference>
<dbReference type="Pfam" id="PF13353">
    <property type="entry name" value="Fer4_12"/>
    <property type="match status" value="1"/>
</dbReference>
<dbReference type="Pfam" id="PF06463">
    <property type="entry name" value="Mob_synth_C"/>
    <property type="match status" value="1"/>
</dbReference>
<dbReference type="Pfam" id="PF04055">
    <property type="entry name" value="Radical_SAM"/>
    <property type="match status" value="1"/>
</dbReference>
<dbReference type="SFLD" id="SFLDG01383">
    <property type="entry name" value="cyclic_pyranopterin_phosphate"/>
    <property type="match status" value="1"/>
</dbReference>
<dbReference type="SFLD" id="SFLDG01072">
    <property type="entry name" value="dehydrogenase_like"/>
    <property type="match status" value="1"/>
</dbReference>
<dbReference type="SMART" id="SM00729">
    <property type="entry name" value="Elp3"/>
    <property type="match status" value="1"/>
</dbReference>
<dbReference type="SUPFAM" id="SSF102114">
    <property type="entry name" value="Radical SAM enzymes"/>
    <property type="match status" value="1"/>
</dbReference>
<dbReference type="PROSITE" id="PS01305">
    <property type="entry name" value="MOAA_NIFB_PQQE"/>
    <property type="match status" value="1"/>
</dbReference>
<dbReference type="PROSITE" id="PS51918">
    <property type="entry name" value="RADICAL_SAM"/>
    <property type="match status" value="1"/>
</dbReference>
<gene>
    <name evidence="1" type="primary">moaA</name>
    <name type="ordered locus">Cgl1197</name>
    <name type="ordered locus">cg1352</name>
</gene>
<proteinExistence type="inferred from homology"/>
<sequence>MTTRLYLSPTPPRNDREGASKSTSASIKHDAYLPPADGNRVLVDRFGRIARDLRVSLTDRCNLRCTYCMPAEGLEWLPTEQTLNDAEVLRLIRIAVVKLGIRQIRFTGGEPLLRKNLEDIIAGTAALRTDEGEKVHIALTTNGLGLDKRIAGLKEAGLDRVNISLDTIDAERYVSLTRRDRLSGVLASIDAAVAAGLHPVKINAVVMPGVNEVDIVPLAEYCISKGSQLRFIEQMPLGPREQWKRGDMVTAEEILARLEEKFTLSPAKEPRGAAPAALWNVVDKSNPDITGQIGIIASVTHPFCGDCDRSRLTTDGTIRNCLFSRTETPLRDALRDGASDDELAQLWAGAMWEKKPGHGIDDEGFLQPDRPMSAIGG</sequence>